<proteinExistence type="inferred from homology"/>
<sequence>MSIVTPYEDLLRFVLETGTPKSDRTGTGTRSLFGQQMRYDLSAGFPLLTTKKVHFKSVAYELLWFLRGDSNIGWLHEHGVTIWDEWASDTGELGPIYGVQWRSWPAPSGEHIDQISAALDLLRTDPDSRRIIVSAWNVGEIERMALPPCHAFFQFYVADGRLSCQLYQRSADLFLGVPFNIASYALLTHMMAAQAGLSVGEFIWTGGDCHIYDNHVEQVRLQLSREPRPYPKLLLADRDSIFEYTYEDIVVKNYDPHPAIKAPVAV</sequence>
<comment type="function">
    <text evidence="2">Catalyzes the reductive methylation of 2'-deoxyuridine-5'-monophosphate (dUMP) to 2'-deoxythymidine-5'-monophosphate (dTMP) while utilizing 5,10-methylenetetrahydrofolate (mTHF) as the methyl donor and reductant in the reaction, yielding dihydrofolate (DHF) as a by-product. This enzymatic reaction provides an intracellular de novo source of dTMP, an essential precursor for DNA biosynthesis.</text>
</comment>
<comment type="catalytic activity">
    <reaction evidence="2">
        <text>dUMP + (6R)-5,10-methylene-5,6,7,8-tetrahydrofolate = 7,8-dihydrofolate + dTMP</text>
        <dbReference type="Rhea" id="RHEA:12104"/>
        <dbReference type="ChEBI" id="CHEBI:15636"/>
        <dbReference type="ChEBI" id="CHEBI:57451"/>
        <dbReference type="ChEBI" id="CHEBI:63528"/>
        <dbReference type="ChEBI" id="CHEBI:246422"/>
        <dbReference type="EC" id="2.1.1.45"/>
    </reaction>
</comment>
<comment type="pathway">
    <text evidence="2">Pyrimidine metabolism; dTTP biosynthesis.</text>
</comment>
<comment type="subunit">
    <text evidence="2">Homodimer.</text>
</comment>
<comment type="subcellular location">
    <subcellularLocation>
        <location evidence="2">Cytoplasm</location>
    </subcellularLocation>
</comment>
<comment type="similarity">
    <text evidence="2">Belongs to the thymidylate synthase family. Bacterial-type ThyA subfamily.</text>
</comment>
<comment type="sequence caution" evidence="1">
    <conflict type="erroneous initiation">
        <sequence resource="EMBL-CDS" id="SIU01404"/>
    </conflict>
    <text>Truncated N-terminus.</text>
</comment>
<evidence type="ECO:0000250" key="1">
    <source>
        <dbReference type="UniProtKB" id="P9WFR9"/>
    </source>
</evidence>
<evidence type="ECO:0000255" key="2">
    <source>
        <dbReference type="HAMAP-Rule" id="MF_00008"/>
    </source>
</evidence>
<keyword id="KW-0963">Cytoplasm</keyword>
<keyword id="KW-0489">Methyltransferase</keyword>
<keyword id="KW-0545">Nucleotide biosynthesis</keyword>
<keyword id="KW-1185">Reference proteome</keyword>
<keyword id="KW-0808">Transferase</keyword>
<dbReference type="EC" id="2.1.1.45" evidence="2"/>
<dbReference type="EMBL" id="LT708304">
    <property type="protein sequence ID" value="SIU01404.1"/>
    <property type="status" value="ALT_INIT"/>
    <property type="molecule type" value="Genomic_DNA"/>
</dbReference>
<dbReference type="RefSeq" id="NP_856432.1">
    <property type="nucleotide sequence ID" value="NC_002945.3"/>
</dbReference>
<dbReference type="RefSeq" id="WP_003911953.1">
    <property type="nucleotide sequence ID" value="NC_002945.4"/>
</dbReference>
<dbReference type="SMR" id="P67045"/>
<dbReference type="KEGG" id="mbo:BQ2027_MB2786C"/>
<dbReference type="PATRIC" id="fig|233413.5.peg.3053"/>
<dbReference type="UniPathway" id="UPA00575"/>
<dbReference type="Proteomes" id="UP000001419">
    <property type="component" value="Chromosome"/>
</dbReference>
<dbReference type="GO" id="GO:0005829">
    <property type="term" value="C:cytosol"/>
    <property type="evidence" value="ECO:0007669"/>
    <property type="project" value="TreeGrafter"/>
</dbReference>
<dbReference type="GO" id="GO:0004799">
    <property type="term" value="F:thymidylate synthase activity"/>
    <property type="evidence" value="ECO:0007669"/>
    <property type="project" value="UniProtKB-UniRule"/>
</dbReference>
<dbReference type="GO" id="GO:0006231">
    <property type="term" value="P:dTMP biosynthetic process"/>
    <property type="evidence" value="ECO:0007669"/>
    <property type="project" value="UniProtKB-UniRule"/>
</dbReference>
<dbReference type="GO" id="GO:0006235">
    <property type="term" value="P:dTTP biosynthetic process"/>
    <property type="evidence" value="ECO:0007669"/>
    <property type="project" value="UniProtKB-UniRule"/>
</dbReference>
<dbReference type="GO" id="GO:0032259">
    <property type="term" value="P:methylation"/>
    <property type="evidence" value="ECO:0007669"/>
    <property type="project" value="UniProtKB-KW"/>
</dbReference>
<dbReference type="CDD" id="cd00351">
    <property type="entry name" value="TS_Pyrimidine_HMase"/>
    <property type="match status" value="1"/>
</dbReference>
<dbReference type="FunFam" id="3.30.572.10:FF:000001">
    <property type="entry name" value="Thymidylate synthase"/>
    <property type="match status" value="1"/>
</dbReference>
<dbReference type="Gene3D" id="3.30.572.10">
    <property type="entry name" value="Thymidylate synthase/dCMP hydroxymethylase domain"/>
    <property type="match status" value="1"/>
</dbReference>
<dbReference type="HAMAP" id="MF_00008">
    <property type="entry name" value="Thymidy_synth_bact"/>
    <property type="match status" value="1"/>
</dbReference>
<dbReference type="InterPro" id="IPR045097">
    <property type="entry name" value="Thymidate_synth/dCMP_Mease"/>
</dbReference>
<dbReference type="InterPro" id="IPR023451">
    <property type="entry name" value="Thymidate_synth/dCMP_Mease_dom"/>
</dbReference>
<dbReference type="InterPro" id="IPR036926">
    <property type="entry name" value="Thymidate_synth/dCMP_Mease_sf"/>
</dbReference>
<dbReference type="InterPro" id="IPR000398">
    <property type="entry name" value="Thymidylate_synthase"/>
</dbReference>
<dbReference type="InterPro" id="IPR020940">
    <property type="entry name" value="Thymidylate_synthase_AS"/>
</dbReference>
<dbReference type="NCBIfam" id="NF002497">
    <property type="entry name" value="PRK01827.1-3"/>
    <property type="match status" value="1"/>
</dbReference>
<dbReference type="NCBIfam" id="NF002499">
    <property type="entry name" value="PRK01827.1-5"/>
    <property type="match status" value="1"/>
</dbReference>
<dbReference type="NCBIfam" id="TIGR03284">
    <property type="entry name" value="thym_sym"/>
    <property type="match status" value="2"/>
</dbReference>
<dbReference type="PANTHER" id="PTHR11548:SF9">
    <property type="entry name" value="THYMIDYLATE SYNTHASE"/>
    <property type="match status" value="1"/>
</dbReference>
<dbReference type="PANTHER" id="PTHR11548">
    <property type="entry name" value="THYMIDYLATE SYNTHASE 1"/>
    <property type="match status" value="1"/>
</dbReference>
<dbReference type="Pfam" id="PF00303">
    <property type="entry name" value="Thymidylat_synt"/>
    <property type="match status" value="1"/>
</dbReference>
<dbReference type="PRINTS" id="PR00108">
    <property type="entry name" value="THYMDSNTHASE"/>
</dbReference>
<dbReference type="SUPFAM" id="SSF55831">
    <property type="entry name" value="Thymidylate synthase/dCMP hydroxymethylase"/>
    <property type="match status" value="1"/>
</dbReference>
<dbReference type="PROSITE" id="PS00091">
    <property type="entry name" value="THYMIDYLATE_SYNTHASE"/>
    <property type="match status" value="1"/>
</dbReference>
<name>TYSY_MYCBO</name>
<feature type="chain" id="PRO_0000140991" description="Thymidylate synthase">
    <location>
        <begin position="1"/>
        <end position="266"/>
    </location>
</feature>
<feature type="active site" description="Nucleophile" evidence="2">
    <location>
        <position position="149"/>
    </location>
</feature>
<feature type="binding site" description="in other chain" evidence="2">
    <location>
        <position position="24"/>
    </location>
    <ligand>
        <name>dUMP</name>
        <dbReference type="ChEBI" id="CHEBI:246422"/>
        <note>ligand shared between dimeric partners</note>
    </ligand>
</feature>
<feature type="binding site" evidence="2">
    <location>
        <position position="54"/>
    </location>
    <ligand>
        <name>(6R)-5,10-methylene-5,6,7,8-tetrahydrofolate</name>
        <dbReference type="ChEBI" id="CHEBI:15636"/>
    </ligand>
</feature>
<feature type="binding site" evidence="2">
    <location>
        <begin position="129"/>
        <end position="130"/>
    </location>
    <ligand>
        <name>dUMP</name>
        <dbReference type="ChEBI" id="CHEBI:246422"/>
        <note>ligand shared between dimeric partners</note>
    </ligand>
</feature>
<feature type="binding site" description="in other chain" evidence="2">
    <location>
        <begin position="169"/>
        <end position="172"/>
    </location>
    <ligand>
        <name>dUMP</name>
        <dbReference type="ChEBI" id="CHEBI:246422"/>
        <note>ligand shared between dimeric partners</note>
    </ligand>
</feature>
<feature type="binding site" evidence="2">
    <location>
        <position position="172"/>
    </location>
    <ligand>
        <name>(6R)-5,10-methylene-5,6,7,8-tetrahydrofolate</name>
        <dbReference type="ChEBI" id="CHEBI:15636"/>
    </ligand>
</feature>
<feature type="binding site" description="in other chain" evidence="2">
    <location>
        <position position="180"/>
    </location>
    <ligand>
        <name>dUMP</name>
        <dbReference type="ChEBI" id="CHEBI:246422"/>
        <note>ligand shared between dimeric partners</note>
    </ligand>
</feature>
<feature type="binding site" description="in other chain" evidence="2">
    <location>
        <begin position="210"/>
        <end position="212"/>
    </location>
    <ligand>
        <name>dUMP</name>
        <dbReference type="ChEBI" id="CHEBI:246422"/>
        <note>ligand shared between dimeric partners</note>
    </ligand>
</feature>
<feature type="binding site" evidence="2">
    <location>
        <position position="265"/>
    </location>
    <ligand>
        <name>(6R)-5,10-methylene-5,6,7,8-tetrahydrofolate</name>
        <dbReference type="ChEBI" id="CHEBI:15636"/>
    </ligand>
</feature>
<accession>P67045</accession>
<accession>A0A1R3Y263</accession>
<accession>O33306</accession>
<accession>X2BLW1</accession>
<protein>
    <recommendedName>
        <fullName evidence="2">Thymidylate synthase</fullName>
        <shortName evidence="2">TS</shortName>
        <shortName evidence="2">TSase</shortName>
        <ecNumber evidence="2">2.1.1.45</ecNumber>
    </recommendedName>
</protein>
<organism>
    <name type="scientific">Mycobacterium bovis (strain ATCC BAA-935 / AF2122/97)</name>
    <dbReference type="NCBI Taxonomy" id="233413"/>
    <lineage>
        <taxon>Bacteria</taxon>
        <taxon>Bacillati</taxon>
        <taxon>Actinomycetota</taxon>
        <taxon>Actinomycetes</taxon>
        <taxon>Mycobacteriales</taxon>
        <taxon>Mycobacteriaceae</taxon>
        <taxon>Mycobacterium</taxon>
        <taxon>Mycobacterium tuberculosis complex</taxon>
    </lineage>
</organism>
<gene>
    <name evidence="2" type="primary">thyA</name>
    <name type="ordered locus">BQ2027_MB2786C</name>
</gene>
<reference key="1">
    <citation type="journal article" date="2003" name="Proc. Natl. Acad. Sci. U.S.A.">
        <title>The complete genome sequence of Mycobacterium bovis.</title>
        <authorList>
            <person name="Garnier T."/>
            <person name="Eiglmeier K."/>
            <person name="Camus J.-C."/>
            <person name="Medina N."/>
            <person name="Mansoor H."/>
            <person name="Pryor M."/>
            <person name="Duthoy S."/>
            <person name="Grondin S."/>
            <person name="Lacroix C."/>
            <person name="Monsempe C."/>
            <person name="Simon S."/>
            <person name="Harris B."/>
            <person name="Atkin R."/>
            <person name="Doggett J."/>
            <person name="Mayes R."/>
            <person name="Keating L."/>
            <person name="Wheeler P.R."/>
            <person name="Parkhill J."/>
            <person name="Barrell B.G."/>
            <person name="Cole S.T."/>
            <person name="Gordon S.V."/>
            <person name="Hewinson R.G."/>
        </authorList>
    </citation>
    <scope>NUCLEOTIDE SEQUENCE [LARGE SCALE GENOMIC DNA]</scope>
    <source>
        <strain>ATCC BAA-935 / AF2122/97</strain>
    </source>
</reference>
<reference key="2">
    <citation type="journal article" date="2017" name="Genome Announc.">
        <title>Updated reference genome sequence and annotation of Mycobacterium bovis AF2122/97.</title>
        <authorList>
            <person name="Malone K.M."/>
            <person name="Farrell D."/>
            <person name="Stuber T.P."/>
            <person name="Schubert O.T."/>
            <person name="Aebersold R."/>
            <person name="Robbe-Austerman S."/>
            <person name="Gordon S.V."/>
        </authorList>
    </citation>
    <scope>NUCLEOTIDE SEQUENCE [LARGE SCALE GENOMIC DNA]</scope>
    <scope>GENOME REANNOTATION</scope>
    <source>
        <strain>ATCC BAA-935 / AF2122/97</strain>
    </source>
</reference>